<dbReference type="EC" id="2.2.1.7" evidence="1"/>
<dbReference type="EMBL" id="CP001013">
    <property type="protein sequence ID" value="ACB35631.1"/>
    <property type="molecule type" value="Genomic_DNA"/>
</dbReference>
<dbReference type="RefSeq" id="WP_012348378.1">
    <property type="nucleotide sequence ID" value="NC_010524.1"/>
</dbReference>
<dbReference type="SMR" id="B1Y2X5"/>
<dbReference type="STRING" id="395495.Lcho_3373"/>
<dbReference type="KEGG" id="lch:Lcho_3373"/>
<dbReference type="eggNOG" id="COG1154">
    <property type="taxonomic scope" value="Bacteria"/>
</dbReference>
<dbReference type="HOGENOM" id="CLU_009227_1_4_4"/>
<dbReference type="OrthoDB" id="9803371at2"/>
<dbReference type="UniPathway" id="UPA00064">
    <property type="reaction ID" value="UER00091"/>
</dbReference>
<dbReference type="Proteomes" id="UP000001693">
    <property type="component" value="Chromosome"/>
</dbReference>
<dbReference type="GO" id="GO:0005829">
    <property type="term" value="C:cytosol"/>
    <property type="evidence" value="ECO:0007669"/>
    <property type="project" value="TreeGrafter"/>
</dbReference>
<dbReference type="GO" id="GO:0008661">
    <property type="term" value="F:1-deoxy-D-xylulose-5-phosphate synthase activity"/>
    <property type="evidence" value="ECO:0007669"/>
    <property type="project" value="UniProtKB-UniRule"/>
</dbReference>
<dbReference type="GO" id="GO:0000287">
    <property type="term" value="F:magnesium ion binding"/>
    <property type="evidence" value="ECO:0007669"/>
    <property type="project" value="UniProtKB-UniRule"/>
</dbReference>
<dbReference type="GO" id="GO:0030976">
    <property type="term" value="F:thiamine pyrophosphate binding"/>
    <property type="evidence" value="ECO:0007669"/>
    <property type="project" value="UniProtKB-UniRule"/>
</dbReference>
<dbReference type="GO" id="GO:0052865">
    <property type="term" value="P:1-deoxy-D-xylulose 5-phosphate biosynthetic process"/>
    <property type="evidence" value="ECO:0007669"/>
    <property type="project" value="UniProtKB-UniPathway"/>
</dbReference>
<dbReference type="GO" id="GO:0019288">
    <property type="term" value="P:isopentenyl diphosphate biosynthetic process, methylerythritol 4-phosphate pathway"/>
    <property type="evidence" value="ECO:0007669"/>
    <property type="project" value="TreeGrafter"/>
</dbReference>
<dbReference type="GO" id="GO:0016114">
    <property type="term" value="P:terpenoid biosynthetic process"/>
    <property type="evidence" value="ECO:0007669"/>
    <property type="project" value="UniProtKB-UniRule"/>
</dbReference>
<dbReference type="GO" id="GO:0009228">
    <property type="term" value="P:thiamine biosynthetic process"/>
    <property type="evidence" value="ECO:0007669"/>
    <property type="project" value="UniProtKB-UniRule"/>
</dbReference>
<dbReference type="CDD" id="cd02007">
    <property type="entry name" value="TPP_DXS"/>
    <property type="match status" value="1"/>
</dbReference>
<dbReference type="CDD" id="cd07033">
    <property type="entry name" value="TPP_PYR_DXS_TK_like"/>
    <property type="match status" value="1"/>
</dbReference>
<dbReference type="FunFam" id="3.40.50.920:FF:000002">
    <property type="entry name" value="1-deoxy-D-xylulose-5-phosphate synthase"/>
    <property type="match status" value="1"/>
</dbReference>
<dbReference type="FunFam" id="3.40.50.970:FF:000005">
    <property type="entry name" value="1-deoxy-D-xylulose-5-phosphate synthase"/>
    <property type="match status" value="1"/>
</dbReference>
<dbReference type="Gene3D" id="3.40.50.920">
    <property type="match status" value="1"/>
</dbReference>
<dbReference type="Gene3D" id="3.40.50.970">
    <property type="match status" value="2"/>
</dbReference>
<dbReference type="HAMAP" id="MF_00315">
    <property type="entry name" value="DXP_synth"/>
    <property type="match status" value="1"/>
</dbReference>
<dbReference type="InterPro" id="IPR005477">
    <property type="entry name" value="Dxylulose-5-P_synthase"/>
</dbReference>
<dbReference type="InterPro" id="IPR029061">
    <property type="entry name" value="THDP-binding"/>
</dbReference>
<dbReference type="InterPro" id="IPR009014">
    <property type="entry name" value="Transketo_C/PFOR_II"/>
</dbReference>
<dbReference type="InterPro" id="IPR005475">
    <property type="entry name" value="Transketolase-like_Pyr-bd"/>
</dbReference>
<dbReference type="InterPro" id="IPR020826">
    <property type="entry name" value="Transketolase_BS"/>
</dbReference>
<dbReference type="InterPro" id="IPR033248">
    <property type="entry name" value="Transketolase_C"/>
</dbReference>
<dbReference type="InterPro" id="IPR049557">
    <property type="entry name" value="Transketolase_CS"/>
</dbReference>
<dbReference type="NCBIfam" id="TIGR00204">
    <property type="entry name" value="dxs"/>
    <property type="match status" value="1"/>
</dbReference>
<dbReference type="NCBIfam" id="NF003933">
    <property type="entry name" value="PRK05444.2-2"/>
    <property type="match status" value="1"/>
</dbReference>
<dbReference type="PANTHER" id="PTHR43322">
    <property type="entry name" value="1-D-DEOXYXYLULOSE 5-PHOSPHATE SYNTHASE-RELATED"/>
    <property type="match status" value="1"/>
</dbReference>
<dbReference type="PANTHER" id="PTHR43322:SF5">
    <property type="entry name" value="1-DEOXY-D-XYLULOSE-5-PHOSPHATE SYNTHASE, CHLOROPLASTIC"/>
    <property type="match status" value="1"/>
</dbReference>
<dbReference type="Pfam" id="PF13292">
    <property type="entry name" value="DXP_synthase_N"/>
    <property type="match status" value="1"/>
</dbReference>
<dbReference type="Pfam" id="PF02779">
    <property type="entry name" value="Transket_pyr"/>
    <property type="match status" value="1"/>
</dbReference>
<dbReference type="Pfam" id="PF02780">
    <property type="entry name" value="Transketolase_C"/>
    <property type="match status" value="1"/>
</dbReference>
<dbReference type="SMART" id="SM00861">
    <property type="entry name" value="Transket_pyr"/>
    <property type="match status" value="1"/>
</dbReference>
<dbReference type="SUPFAM" id="SSF52518">
    <property type="entry name" value="Thiamin diphosphate-binding fold (THDP-binding)"/>
    <property type="match status" value="2"/>
</dbReference>
<dbReference type="SUPFAM" id="SSF52922">
    <property type="entry name" value="TK C-terminal domain-like"/>
    <property type="match status" value="1"/>
</dbReference>
<dbReference type="PROSITE" id="PS00801">
    <property type="entry name" value="TRANSKETOLASE_1"/>
    <property type="match status" value="1"/>
</dbReference>
<dbReference type="PROSITE" id="PS00802">
    <property type="entry name" value="TRANSKETOLASE_2"/>
    <property type="match status" value="1"/>
</dbReference>
<evidence type="ECO:0000255" key="1">
    <source>
        <dbReference type="HAMAP-Rule" id="MF_00315"/>
    </source>
</evidence>
<organism>
    <name type="scientific">Leptothrix cholodnii (strain ATCC 51168 / LMG 8142 / SP-6)</name>
    <name type="common">Leptothrix discophora (strain SP-6)</name>
    <dbReference type="NCBI Taxonomy" id="395495"/>
    <lineage>
        <taxon>Bacteria</taxon>
        <taxon>Pseudomonadati</taxon>
        <taxon>Pseudomonadota</taxon>
        <taxon>Betaproteobacteria</taxon>
        <taxon>Burkholderiales</taxon>
        <taxon>Sphaerotilaceae</taxon>
        <taxon>Leptothrix</taxon>
    </lineage>
</organism>
<accession>B1Y2X5</accession>
<feature type="chain" id="PRO_1000115749" description="1-deoxy-D-xylulose-5-phosphate synthase">
    <location>
        <begin position="1"/>
        <end position="639"/>
    </location>
</feature>
<feature type="binding site" evidence="1">
    <location>
        <position position="76"/>
    </location>
    <ligand>
        <name>thiamine diphosphate</name>
        <dbReference type="ChEBI" id="CHEBI:58937"/>
    </ligand>
</feature>
<feature type="binding site" evidence="1">
    <location>
        <begin position="117"/>
        <end position="119"/>
    </location>
    <ligand>
        <name>thiamine diphosphate</name>
        <dbReference type="ChEBI" id="CHEBI:58937"/>
    </ligand>
</feature>
<feature type="binding site" evidence="1">
    <location>
        <position position="148"/>
    </location>
    <ligand>
        <name>Mg(2+)</name>
        <dbReference type="ChEBI" id="CHEBI:18420"/>
    </ligand>
</feature>
<feature type="binding site" evidence="1">
    <location>
        <begin position="149"/>
        <end position="150"/>
    </location>
    <ligand>
        <name>thiamine diphosphate</name>
        <dbReference type="ChEBI" id="CHEBI:58937"/>
    </ligand>
</feature>
<feature type="binding site" evidence="1">
    <location>
        <position position="181"/>
    </location>
    <ligand>
        <name>Mg(2+)</name>
        <dbReference type="ChEBI" id="CHEBI:18420"/>
    </ligand>
</feature>
<feature type="binding site" evidence="1">
    <location>
        <position position="181"/>
    </location>
    <ligand>
        <name>thiamine diphosphate</name>
        <dbReference type="ChEBI" id="CHEBI:58937"/>
    </ligand>
</feature>
<feature type="binding site" evidence="1">
    <location>
        <position position="288"/>
    </location>
    <ligand>
        <name>thiamine diphosphate</name>
        <dbReference type="ChEBI" id="CHEBI:58937"/>
    </ligand>
</feature>
<feature type="binding site" evidence="1">
    <location>
        <position position="370"/>
    </location>
    <ligand>
        <name>thiamine diphosphate</name>
        <dbReference type="ChEBI" id="CHEBI:58937"/>
    </ligand>
</feature>
<proteinExistence type="inferred from homology"/>
<gene>
    <name evidence="1" type="primary">dxs</name>
    <name type="ordered locus">Lcho_3373</name>
</gene>
<comment type="function">
    <text evidence="1">Catalyzes the acyloin condensation reaction between C atoms 2 and 3 of pyruvate and glyceraldehyde 3-phosphate to yield 1-deoxy-D-xylulose-5-phosphate (DXP).</text>
</comment>
<comment type="catalytic activity">
    <reaction evidence="1">
        <text>D-glyceraldehyde 3-phosphate + pyruvate + H(+) = 1-deoxy-D-xylulose 5-phosphate + CO2</text>
        <dbReference type="Rhea" id="RHEA:12605"/>
        <dbReference type="ChEBI" id="CHEBI:15361"/>
        <dbReference type="ChEBI" id="CHEBI:15378"/>
        <dbReference type="ChEBI" id="CHEBI:16526"/>
        <dbReference type="ChEBI" id="CHEBI:57792"/>
        <dbReference type="ChEBI" id="CHEBI:59776"/>
        <dbReference type="EC" id="2.2.1.7"/>
    </reaction>
</comment>
<comment type="cofactor">
    <cofactor evidence="1">
        <name>Mg(2+)</name>
        <dbReference type="ChEBI" id="CHEBI:18420"/>
    </cofactor>
    <text evidence="1">Binds 1 Mg(2+) ion per subunit.</text>
</comment>
<comment type="cofactor">
    <cofactor evidence="1">
        <name>thiamine diphosphate</name>
        <dbReference type="ChEBI" id="CHEBI:58937"/>
    </cofactor>
    <text evidence="1">Binds 1 thiamine pyrophosphate per subunit.</text>
</comment>
<comment type="pathway">
    <text evidence="1">Metabolic intermediate biosynthesis; 1-deoxy-D-xylulose 5-phosphate biosynthesis; 1-deoxy-D-xylulose 5-phosphate from D-glyceraldehyde 3-phosphate and pyruvate: step 1/1.</text>
</comment>
<comment type="subunit">
    <text evidence="1">Homodimer.</text>
</comment>
<comment type="similarity">
    <text evidence="1">Belongs to the transketolase family. DXPS subfamily.</text>
</comment>
<protein>
    <recommendedName>
        <fullName evidence="1">1-deoxy-D-xylulose-5-phosphate synthase</fullName>
        <ecNumber evidence="1">2.2.1.7</ecNumber>
    </recommendedName>
    <alternativeName>
        <fullName evidence="1">1-deoxyxylulose-5-phosphate synthase</fullName>
        <shortName evidence="1">DXP synthase</shortName>
        <shortName evidence="1">DXPS</shortName>
    </alternativeName>
</protein>
<name>DXS_LEPCP</name>
<keyword id="KW-0414">Isoprene biosynthesis</keyword>
<keyword id="KW-0460">Magnesium</keyword>
<keyword id="KW-0479">Metal-binding</keyword>
<keyword id="KW-1185">Reference proteome</keyword>
<keyword id="KW-0784">Thiamine biosynthesis</keyword>
<keyword id="KW-0786">Thiamine pyrophosphate</keyword>
<keyword id="KW-0808">Transferase</keyword>
<sequence>MNAQPLLPRIQSPADVRRLSRAELKQLADELREFVLQSVSRTGGHLSSNLGTVELTVALHHVFDTPEDRLVWDVGHQTYPHKILTGRRDRMSTLRQLGGLSGFPRRDESEYDTFGTAHSSTSISAALGMALAAQQKGEKRHAVAIIGDGSMTAGMAFEALNNGGMPHAGRVPNLLVILNDNDMSISPPVGALNKYLARLLSGRFYAAAREGAKSVLKSAPTLFELARRFEEHAKGMVVPGTIFEEFGFNYVGPIDGHDLDALIPTLENLRDKPGAQFLHVVTKKGYGYKLAEADPIAYHGPGKFDPQIGLVKPATPPKTTFTQVFGQWLCDMAAADPKLVAITPAMREGSGMVEFHKRFPERYHDVGIAEQHAVTFAAGLACEGLRPVVAIYSTFLQRAYDQLIHDVALQNLPMVFALDRAGLVGADGATHAGAYDIAFVRCIPNMSLLAPADEAETRRALSTAFAHDGPVAVRYPRGSGAGTAVETGFETLPWGRGEVRRQAGGHVRGPRIAILAFGTLLYPALAAAEKLDATVANMRFIKPLDAALVEQLARTHDALVTVEEGCLMGGAGSAVLEALQAAGLQTPVLTLGLPDQFIEHGDPALLLAACGLDSAGIEAAIQKRFCASAPSHLRPVANG</sequence>
<reference key="1">
    <citation type="submission" date="2008-03" db="EMBL/GenBank/DDBJ databases">
        <title>Complete sequence of Leptothrix cholodnii SP-6.</title>
        <authorList>
            <consortium name="US DOE Joint Genome Institute"/>
            <person name="Copeland A."/>
            <person name="Lucas S."/>
            <person name="Lapidus A."/>
            <person name="Glavina del Rio T."/>
            <person name="Dalin E."/>
            <person name="Tice H."/>
            <person name="Bruce D."/>
            <person name="Goodwin L."/>
            <person name="Pitluck S."/>
            <person name="Chertkov O."/>
            <person name="Brettin T."/>
            <person name="Detter J.C."/>
            <person name="Han C."/>
            <person name="Kuske C.R."/>
            <person name="Schmutz J."/>
            <person name="Larimer F."/>
            <person name="Land M."/>
            <person name="Hauser L."/>
            <person name="Kyrpides N."/>
            <person name="Lykidis A."/>
            <person name="Emerson D."/>
            <person name="Richardson P."/>
        </authorList>
    </citation>
    <scope>NUCLEOTIDE SEQUENCE [LARGE SCALE GENOMIC DNA]</scope>
    <source>
        <strain>ATCC 51168 / LMG 8142 / SP-6</strain>
    </source>
</reference>